<dbReference type="EC" id="2.7.7.2" evidence="1"/>
<dbReference type="EMBL" id="CP002117">
    <property type="protein sequence ID" value="ADN35334.1"/>
    <property type="molecule type" value="Genomic_DNA"/>
</dbReference>
<dbReference type="RefSeq" id="WP_013328512.1">
    <property type="nucleotide sequence ID" value="NC_014507.1"/>
</dbReference>
<dbReference type="SMR" id="E1RHM5"/>
<dbReference type="STRING" id="679926.Mpet_0560"/>
<dbReference type="GeneID" id="9743008"/>
<dbReference type="KEGG" id="mpi:Mpet_0560"/>
<dbReference type="eggNOG" id="arCOG01222">
    <property type="taxonomic scope" value="Archaea"/>
</dbReference>
<dbReference type="HOGENOM" id="CLU_034585_2_1_2"/>
<dbReference type="OrthoDB" id="1912at2157"/>
<dbReference type="UniPathway" id="UPA00277">
    <property type="reaction ID" value="UER00407"/>
</dbReference>
<dbReference type="Proteomes" id="UP000006565">
    <property type="component" value="Chromosome"/>
</dbReference>
<dbReference type="GO" id="GO:0005524">
    <property type="term" value="F:ATP binding"/>
    <property type="evidence" value="ECO:0007669"/>
    <property type="project" value="UniProtKB-UniRule"/>
</dbReference>
<dbReference type="GO" id="GO:0003919">
    <property type="term" value="F:FMN adenylyltransferase activity"/>
    <property type="evidence" value="ECO:0007669"/>
    <property type="project" value="UniProtKB-UniRule"/>
</dbReference>
<dbReference type="GO" id="GO:0006747">
    <property type="term" value="P:FAD biosynthetic process"/>
    <property type="evidence" value="ECO:0007669"/>
    <property type="project" value="UniProtKB-UniRule"/>
</dbReference>
<dbReference type="GO" id="GO:0046444">
    <property type="term" value="P:FMN metabolic process"/>
    <property type="evidence" value="ECO:0007669"/>
    <property type="project" value="UniProtKB-UniRule"/>
</dbReference>
<dbReference type="Gene3D" id="3.40.50.620">
    <property type="entry name" value="HUPs"/>
    <property type="match status" value="1"/>
</dbReference>
<dbReference type="HAMAP" id="MF_02115">
    <property type="entry name" value="FAD_synth_arch"/>
    <property type="match status" value="1"/>
</dbReference>
<dbReference type="InterPro" id="IPR050385">
    <property type="entry name" value="Archaeal_FAD_synthase"/>
</dbReference>
<dbReference type="InterPro" id="IPR004821">
    <property type="entry name" value="Cyt_trans-like"/>
</dbReference>
<dbReference type="InterPro" id="IPR024902">
    <property type="entry name" value="FAD_synth_RibL"/>
</dbReference>
<dbReference type="InterPro" id="IPR014729">
    <property type="entry name" value="Rossmann-like_a/b/a_fold"/>
</dbReference>
<dbReference type="NCBIfam" id="TIGR00125">
    <property type="entry name" value="cyt_tran_rel"/>
    <property type="match status" value="1"/>
</dbReference>
<dbReference type="PANTHER" id="PTHR43793">
    <property type="entry name" value="FAD SYNTHASE"/>
    <property type="match status" value="1"/>
</dbReference>
<dbReference type="PANTHER" id="PTHR43793:SF1">
    <property type="entry name" value="FAD SYNTHASE"/>
    <property type="match status" value="1"/>
</dbReference>
<dbReference type="Pfam" id="PF01467">
    <property type="entry name" value="CTP_transf_like"/>
    <property type="match status" value="1"/>
</dbReference>
<dbReference type="SUPFAM" id="SSF52374">
    <property type="entry name" value="Nucleotidylyl transferase"/>
    <property type="match status" value="1"/>
</dbReference>
<organism>
    <name type="scientific">Methanolacinia petrolearia (strain DSM 11571 / OCM 486 / SEBR 4847)</name>
    <name type="common">Methanoplanus petrolearius</name>
    <dbReference type="NCBI Taxonomy" id="679926"/>
    <lineage>
        <taxon>Archaea</taxon>
        <taxon>Methanobacteriati</taxon>
        <taxon>Methanobacteriota</taxon>
        <taxon>Stenosarchaea group</taxon>
        <taxon>Methanomicrobia</taxon>
        <taxon>Methanomicrobiales</taxon>
        <taxon>Methanomicrobiaceae</taxon>
        <taxon>Methanolacinia</taxon>
    </lineage>
</organism>
<accession>E1RHM5</accession>
<name>RIBL_METP4</name>
<sequence>MKRIVATGTFDILHPGHIYYLEESRKLGDELHVIIARDENVRHKPKPVIPEQQRLRMVQSLKPVDYARLGSTTDIFEPIREIQPDIITLGFNQFFNEEKLKCDLEENGISAEVVRIEGYSGEGFCSSRNIMKQILIRRCKELQDDSTD</sequence>
<gene>
    <name evidence="1" type="primary">ribL</name>
    <name type="ordered locus">Mpet_0560</name>
</gene>
<protein>
    <recommendedName>
        <fullName evidence="1">FAD synthase</fullName>
        <ecNumber evidence="1">2.7.7.2</ecNumber>
    </recommendedName>
    <alternativeName>
        <fullName evidence="1">FMN adenylyltransferase</fullName>
    </alternativeName>
    <alternativeName>
        <fullName evidence="1">Flavin adenine dinucleotide synthase</fullName>
    </alternativeName>
</protein>
<keyword id="KW-0067">ATP-binding</keyword>
<keyword id="KW-0274">FAD</keyword>
<keyword id="KW-0285">Flavoprotein</keyword>
<keyword id="KW-0288">FMN</keyword>
<keyword id="KW-0547">Nucleotide-binding</keyword>
<keyword id="KW-0548">Nucleotidyltransferase</keyword>
<keyword id="KW-1185">Reference proteome</keyword>
<keyword id="KW-0808">Transferase</keyword>
<reference key="1">
    <citation type="journal article" date="2010" name="Stand. Genomic Sci.">
        <title>Complete genome sequence of Methanoplanus petrolearius type strain (SEBR 4847).</title>
        <authorList>
            <person name="Brambilla E."/>
            <person name="Djao O.D."/>
            <person name="Daligault H."/>
            <person name="Lapidus A."/>
            <person name="Lucas S."/>
            <person name="Hammon N."/>
            <person name="Nolan M."/>
            <person name="Tice H."/>
            <person name="Cheng J.F."/>
            <person name="Han C."/>
            <person name="Tapia R."/>
            <person name="Goodwin L."/>
            <person name="Pitluck S."/>
            <person name="Liolios K."/>
            <person name="Ivanova N."/>
            <person name="Mavromatis K."/>
            <person name="Mikhailova N."/>
            <person name="Pati A."/>
            <person name="Chen A."/>
            <person name="Palaniappan K."/>
            <person name="Land M."/>
            <person name="Hauser L."/>
            <person name="Chang Y.J."/>
            <person name="Jeffries C.D."/>
            <person name="Rohde M."/>
            <person name="Spring S."/>
            <person name="Sikorski J."/>
            <person name="Goker M."/>
            <person name="Woyke T."/>
            <person name="Bristow J."/>
            <person name="Eisen J.A."/>
            <person name="Markowitz V."/>
            <person name="Hugenholtz P."/>
            <person name="Kyrpides N.C."/>
            <person name="Klenk H.P."/>
        </authorList>
    </citation>
    <scope>NUCLEOTIDE SEQUENCE [LARGE SCALE GENOMIC DNA]</scope>
    <source>
        <strain>DSM 11571 / OCM 486 / SEBR 4847</strain>
    </source>
</reference>
<feature type="chain" id="PRO_0000406264" description="FAD synthase">
    <location>
        <begin position="1"/>
        <end position="148"/>
    </location>
</feature>
<feature type="binding site" evidence="1">
    <location>
        <begin position="9"/>
        <end position="10"/>
    </location>
    <ligand>
        <name>ATP</name>
        <dbReference type="ChEBI" id="CHEBI:30616"/>
    </ligand>
</feature>
<feature type="binding site" evidence="1">
    <location>
        <begin position="14"/>
        <end position="17"/>
    </location>
    <ligand>
        <name>ATP</name>
        <dbReference type="ChEBI" id="CHEBI:30616"/>
    </ligand>
</feature>
<feature type="binding site" evidence="1">
    <location>
        <position position="92"/>
    </location>
    <ligand>
        <name>ATP</name>
        <dbReference type="ChEBI" id="CHEBI:30616"/>
    </ligand>
</feature>
<feature type="binding site" evidence="1">
    <location>
        <position position="119"/>
    </location>
    <ligand>
        <name>ATP</name>
        <dbReference type="ChEBI" id="CHEBI:30616"/>
    </ligand>
</feature>
<comment type="function">
    <text evidence="1">Catalyzes the transfer of the AMP portion of ATP to flavin mononucleotide (FMN) to produce flavin adenine dinucleotide (FAD) coenzyme.</text>
</comment>
<comment type="catalytic activity">
    <reaction evidence="1">
        <text>FMN + ATP + H(+) = FAD + diphosphate</text>
        <dbReference type="Rhea" id="RHEA:17237"/>
        <dbReference type="ChEBI" id="CHEBI:15378"/>
        <dbReference type="ChEBI" id="CHEBI:30616"/>
        <dbReference type="ChEBI" id="CHEBI:33019"/>
        <dbReference type="ChEBI" id="CHEBI:57692"/>
        <dbReference type="ChEBI" id="CHEBI:58210"/>
        <dbReference type="EC" id="2.7.7.2"/>
    </reaction>
</comment>
<comment type="cofactor">
    <cofactor evidence="1">
        <name>a divalent metal cation</name>
        <dbReference type="ChEBI" id="CHEBI:60240"/>
    </cofactor>
</comment>
<comment type="pathway">
    <text evidence="1">Cofactor biosynthesis; FAD biosynthesis; FAD from FMN: step 1/1.</text>
</comment>
<comment type="subunit">
    <text evidence="1">Homodimer.</text>
</comment>
<comment type="similarity">
    <text evidence="1">Belongs to the archaeal FAD synthase family.</text>
</comment>
<proteinExistence type="inferred from homology"/>
<evidence type="ECO:0000255" key="1">
    <source>
        <dbReference type="HAMAP-Rule" id="MF_02115"/>
    </source>
</evidence>